<name>YIBN_ECOLI</name>
<protein>
    <recommendedName>
        <fullName>Uncharacterized protein YibN</fullName>
    </recommendedName>
</protein>
<gene>
    <name type="primary">yibN</name>
    <name type="ordered locus">b3611</name>
    <name type="ordered locus">JW3586</name>
</gene>
<sequence length="143" mass="15596">MQEIMQFVGRHPILSIAWIALLVAVLVTTFKSLTSKVKVITRGEATRLINKEDAVVVDLRQRDDFRKGHIAGSINLLPSEIKANNVGELEKHKDKPVIVVDGSGMQCQEPANALTKAGFAQVFVLKEGVAGWAGENLPLVRGK</sequence>
<dbReference type="EMBL" id="U00039">
    <property type="protein sequence ID" value="AAB18588.1"/>
    <property type="molecule type" value="Genomic_DNA"/>
</dbReference>
<dbReference type="EMBL" id="U00096">
    <property type="protein sequence ID" value="AAC76635.1"/>
    <property type="molecule type" value="Genomic_DNA"/>
</dbReference>
<dbReference type="EMBL" id="AP009048">
    <property type="protein sequence ID" value="BAE77681.1"/>
    <property type="molecule type" value="Genomic_DNA"/>
</dbReference>
<dbReference type="PIR" id="S47832">
    <property type="entry name" value="S47832"/>
</dbReference>
<dbReference type="RefSeq" id="NP_418068.1">
    <property type="nucleotide sequence ID" value="NC_000913.3"/>
</dbReference>
<dbReference type="RefSeq" id="WP_001156181.1">
    <property type="nucleotide sequence ID" value="NZ_STEB01000024.1"/>
</dbReference>
<dbReference type="SMR" id="P0AG27"/>
<dbReference type="BioGRID" id="4263297">
    <property type="interactions" value="23"/>
</dbReference>
<dbReference type="FunCoup" id="P0AG27">
    <property type="interactions" value="255"/>
</dbReference>
<dbReference type="IntAct" id="P0AG27">
    <property type="interactions" value="2"/>
</dbReference>
<dbReference type="STRING" id="511145.b3611"/>
<dbReference type="iPTMnet" id="P0AG27"/>
<dbReference type="jPOST" id="P0AG27"/>
<dbReference type="PaxDb" id="511145-b3611"/>
<dbReference type="EnsemblBacteria" id="AAC76635">
    <property type="protein sequence ID" value="AAC76635"/>
    <property type="gene ID" value="b3611"/>
</dbReference>
<dbReference type="GeneID" id="948131"/>
<dbReference type="KEGG" id="ecj:JW3586"/>
<dbReference type="KEGG" id="eco:b3611"/>
<dbReference type="KEGG" id="ecoc:C3026_19580"/>
<dbReference type="PATRIC" id="fig|1411691.4.peg.3095"/>
<dbReference type="EchoBASE" id="EB2203"/>
<dbReference type="eggNOG" id="COG0607">
    <property type="taxonomic scope" value="Bacteria"/>
</dbReference>
<dbReference type="HOGENOM" id="CLU_089574_1_5_6"/>
<dbReference type="InParanoid" id="P0AG27"/>
<dbReference type="OMA" id="VIDVCEP"/>
<dbReference type="OrthoDB" id="9808735at2"/>
<dbReference type="PhylomeDB" id="P0AG27"/>
<dbReference type="BioCyc" id="EcoCyc:EG12295-MONOMER"/>
<dbReference type="PRO" id="PR:P0AG27"/>
<dbReference type="Proteomes" id="UP000000625">
    <property type="component" value="Chromosome"/>
</dbReference>
<dbReference type="GO" id="GO:0005829">
    <property type="term" value="C:cytosol"/>
    <property type="evidence" value="ECO:0000314"/>
    <property type="project" value="EcoCyc"/>
</dbReference>
<dbReference type="CDD" id="cd00158">
    <property type="entry name" value="RHOD"/>
    <property type="match status" value="1"/>
</dbReference>
<dbReference type="FunFam" id="3.40.250.10:FF:000005">
    <property type="entry name" value="Rhodanese-like domain-containing protein"/>
    <property type="match status" value="1"/>
</dbReference>
<dbReference type="Gene3D" id="3.40.250.10">
    <property type="entry name" value="Rhodanese-like domain"/>
    <property type="match status" value="1"/>
</dbReference>
<dbReference type="InterPro" id="IPR050229">
    <property type="entry name" value="GlpE_sulfurtransferase"/>
</dbReference>
<dbReference type="InterPro" id="IPR001763">
    <property type="entry name" value="Rhodanese-like_dom"/>
</dbReference>
<dbReference type="InterPro" id="IPR036873">
    <property type="entry name" value="Rhodanese-like_dom_sf"/>
</dbReference>
<dbReference type="PANTHER" id="PTHR43031">
    <property type="entry name" value="FAD-DEPENDENT OXIDOREDUCTASE"/>
    <property type="match status" value="1"/>
</dbReference>
<dbReference type="PANTHER" id="PTHR43031:SF18">
    <property type="entry name" value="RHODANESE-RELATED SULFURTRANSFERASES"/>
    <property type="match status" value="1"/>
</dbReference>
<dbReference type="Pfam" id="PF00581">
    <property type="entry name" value="Rhodanese"/>
    <property type="match status" value="1"/>
</dbReference>
<dbReference type="SMART" id="SM00450">
    <property type="entry name" value="RHOD"/>
    <property type="match status" value="1"/>
</dbReference>
<dbReference type="SUPFAM" id="SSF52821">
    <property type="entry name" value="Rhodanese/Cell cycle control phosphatase"/>
    <property type="match status" value="1"/>
</dbReference>
<dbReference type="PROSITE" id="PS50206">
    <property type="entry name" value="RHODANESE_3"/>
    <property type="match status" value="1"/>
</dbReference>
<accession>P0AG27</accession>
<accession>P37688</accession>
<accession>Q2M7S5</accession>
<evidence type="ECO:0000255" key="1">
    <source>
        <dbReference type="PROSITE-ProRule" id="PRU00173"/>
    </source>
</evidence>
<evidence type="ECO:0000269" key="2">
    <source>
    </source>
</evidence>
<feature type="chain" id="PRO_0000139424" description="Uncharacterized protein YibN">
    <location>
        <begin position="1"/>
        <end position="143"/>
    </location>
</feature>
<feature type="domain" description="Rhodanese" evidence="1">
    <location>
        <begin position="50"/>
        <end position="143"/>
    </location>
</feature>
<feature type="modified residue" description="N6-acetyllysine" evidence="2">
    <location>
        <position position="91"/>
    </location>
</feature>
<organism>
    <name type="scientific">Escherichia coli (strain K12)</name>
    <dbReference type="NCBI Taxonomy" id="83333"/>
    <lineage>
        <taxon>Bacteria</taxon>
        <taxon>Pseudomonadati</taxon>
        <taxon>Pseudomonadota</taxon>
        <taxon>Gammaproteobacteria</taxon>
        <taxon>Enterobacterales</taxon>
        <taxon>Enterobacteriaceae</taxon>
        <taxon>Escherichia</taxon>
    </lineage>
</organism>
<keyword id="KW-0007">Acetylation</keyword>
<keyword id="KW-1185">Reference proteome</keyword>
<reference key="1">
    <citation type="journal article" date="1994" name="Nucleic Acids Res.">
        <title>Analysis of the Escherichia coli genome. V. DNA sequence of the region from 76.0 to 81.5 minutes.</title>
        <authorList>
            <person name="Sofia H.J."/>
            <person name="Burland V."/>
            <person name="Daniels D.L."/>
            <person name="Plunkett G. III"/>
            <person name="Blattner F.R."/>
        </authorList>
    </citation>
    <scope>NUCLEOTIDE SEQUENCE [LARGE SCALE GENOMIC DNA]</scope>
    <source>
        <strain>K12 / MG1655 / ATCC 47076</strain>
    </source>
</reference>
<reference key="2">
    <citation type="journal article" date="1997" name="Science">
        <title>The complete genome sequence of Escherichia coli K-12.</title>
        <authorList>
            <person name="Blattner F.R."/>
            <person name="Plunkett G. III"/>
            <person name="Bloch C.A."/>
            <person name="Perna N.T."/>
            <person name="Burland V."/>
            <person name="Riley M."/>
            <person name="Collado-Vides J."/>
            <person name="Glasner J.D."/>
            <person name="Rode C.K."/>
            <person name="Mayhew G.F."/>
            <person name="Gregor J."/>
            <person name="Davis N.W."/>
            <person name="Kirkpatrick H.A."/>
            <person name="Goeden M.A."/>
            <person name="Rose D.J."/>
            <person name="Mau B."/>
            <person name="Shao Y."/>
        </authorList>
    </citation>
    <scope>NUCLEOTIDE SEQUENCE [LARGE SCALE GENOMIC DNA]</scope>
    <source>
        <strain>K12 / MG1655 / ATCC 47076</strain>
    </source>
</reference>
<reference key="3">
    <citation type="journal article" date="2006" name="Mol. Syst. Biol.">
        <title>Highly accurate genome sequences of Escherichia coli K-12 strains MG1655 and W3110.</title>
        <authorList>
            <person name="Hayashi K."/>
            <person name="Morooka N."/>
            <person name="Yamamoto Y."/>
            <person name="Fujita K."/>
            <person name="Isono K."/>
            <person name="Choi S."/>
            <person name="Ohtsubo E."/>
            <person name="Baba T."/>
            <person name="Wanner B.L."/>
            <person name="Mori H."/>
            <person name="Horiuchi T."/>
        </authorList>
    </citation>
    <scope>NUCLEOTIDE SEQUENCE [LARGE SCALE GENOMIC DNA]</scope>
    <source>
        <strain>K12 / W3110 / ATCC 27325 / DSM 5911</strain>
    </source>
</reference>
<reference key="4">
    <citation type="journal article" date="2009" name="Mol. Cell. Proteomics">
        <title>Lysine acetylation is a highly abundant and evolutionarily conserved modification in Escherichia coli.</title>
        <authorList>
            <person name="Zhang J."/>
            <person name="Sprung R."/>
            <person name="Pei J."/>
            <person name="Tan X."/>
            <person name="Kim S."/>
            <person name="Zhu H."/>
            <person name="Liu C.F."/>
            <person name="Grishin N.V."/>
            <person name="Zhao Y."/>
        </authorList>
    </citation>
    <scope>ACETYLATION [LARGE SCALE ANALYSIS] AT LYS-91</scope>
    <scope>IDENTIFICATION BY MASS SPECTROMETRY</scope>
    <source>
        <strain>K12 / JW1106</strain>
        <strain>K12 / MG1655 / ATCC 47076</strain>
    </source>
</reference>
<proteinExistence type="evidence at protein level"/>